<comment type="function">
    <text evidence="1">Converts 2C-methyl-D-erythritol 2,4-cyclodiphosphate (ME-2,4cPP) into 1-hydroxy-2-methyl-2-(E)-butenyl 4-diphosphate.</text>
</comment>
<comment type="catalytic activity">
    <reaction evidence="1">
        <text>(2E)-4-hydroxy-3-methylbut-2-enyl diphosphate + oxidized [flavodoxin] + H2O + 2 H(+) = 2-C-methyl-D-erythritol 2,4-cyclic diphosphate + reduced [flavodoxin]</text>
        <dbReference type="Rhea" id="RHEA:43604"/>
        <dbReference type="Rhea" id="RHEA-COMP:10622"/>
        <dbReference type="Rhea" id="RHEA-COMP:10623"/>
        <dbReference type="ChEBI" id="CHEBI:15377"/>
        <dbReference type="ChEBI" id="CHEBI:15378"/>
        <dbReference type="ChEBI" id="CHEBI:57618"/>
        <dbReference type="ChEBI" id="CHEBI:58210"/>
        <dbReference type="ChEBI" id="CHEBI:58483"/>
        <dbReference type="ChEBI" id="CHEBI:128753"/>
        <dbReference type="EC" id="1.17.7.3"/>
    </reaction>
</comment>
<comment type="cofactor">
    <cofactor evidence="1">
        <name>[4Fe-4S] cluster</name>
        <dbReference type="ChEBI" id="CHEBI:49883"/>
    </cofactor>
    <text evidence="1">Binds 1 [4Fe-4S] cluster.</text>
</comment>
<comment type="pathway">
    <text evidence="1">Isoprenoid biosynthesis; isopentenyl diphosphate biosynthesis via DXP pathway; isopentenyl diphosphate from 1-deoxy-D-xylulose 5-phosphate: step 5/6.</text>
</comment>
<comment type="similarity">
    <text evidence="1">Belongs to the IspG family.</text>
</comment>
<proteinExistence type="inferred from homology"/>
<name>ISPG_YERPS</name>
<keyword id="KW-0004">4Fe-4S</keyword>
<keyword id="KW-0408">Iron</keyword>
<keyword id="KW-0411">Iron-sulfur</keyword>
<keyword id="KW-0414">Isoprene biosynthesis</keyword>
<keyword id="KW-0479">Metal-binding</keyword>
<keyword id="KW-0560">Oxidoreductase</keyword>
<organism>
    <name type="scientific">Yersinia pseudotuberculosis serotype I (strain IP32953)</name>
    <dbReference type="NCBI Taxonomy" id="273123"/>
    <lineage>
        <taxon>Bacteria</taxon>
        <taxon>Pseudomonadati</taxon>
        <taxon>Pseudomonadota</taxon>
        <taxon>Gammaproteobacteria</taxon>
        <taxon>Enterobacterales</taxon>
        <taxon>Yersiniaceae</taxon>
        <taxon>Yersinia</taxon>
    </lineage>
</organism>
<sequence>MHNGSPIIRRKSTRIYVGKVPIGDGAPIAVQSMTNTKTTDVDATVAQIKALERVGVDIVRVSIPTMDAAEAFKLIKQQSTVPLVADIHFDYRIALKVAEYGVDCLRINPGNIGNESRIREVVACARDYNIPIRIGINGGSLEKDIQEKYGEPTPEALLESAMRHVDILDRLNFDQFKVSVKASDVFLAVNSYRLLAKQINNPLHLGITEAGGARSGSVKSAIGLGLLLSEGIGDTLRISLAADPVEEVKVGFDILKSLRIRARGINFIACPTCSRQEFDVIGTVNALEQRLEDLITPMDVSIIGCVVNGPGEALVSTIGVTGARNHSGFYEDGVRQKERFDNKAMIDQLEAKIRAKASILDANNRIVINQLDDNK</sequence>
<feature type="chain" id="PRO_0000190666" description="4-hydroxy-3-methylbut-2-en-1-yl diphosphate synthase (flavodoxin)">
    <location>
        <begin position="1"/>
        <end position="375"/>
    </location>
</feature>
<feature type="binding site" evidence="1">
    <location>
        <position position="270"/>
    </location>
    <ligand>
        <name>[4Fe-4S] cluster</name>
        <dbReference type="ChEBI" id="CHEBI:49883"/>
    </ligand>
</feature>
<feature type="binding site" evidence="1">
    <location>
        <position position="273"/>
    </location>
    <ligand>
        <name>[4Fe-4S] cluster</name>
        <dbReference type="ChEBI" id="CHEBI:49883"/>
    </ligand>
</feature>
<feature type="binding site" evidence="1">
    <location>
        <position position="305"/>
    </location>
    <ligand>
        <name>[4Fe-4S] cluster</name>
        <dbReference type="ChEBI" id="CHEBI:49883"/>
    </ligand>
</feature>
<feature type="binding site" evidence="1">
    <location>
        <position position="312"/>
    </location>
    <ligand>
        <name>[4Fe-4S] cluster</name>
        <dbReference type="ChEBI" id="CHEBI:49883"/>
    </ligand>
</feature>
<protein>
    <recommendedName>
        <fullName evidence="1">4-hydroxy-3-methylbut-2-en-1-yl diphosphate synthase (flavodoxin)</fullName>
        <ecNumber evidence="1">1.17.7.3</ecNumber>
    </recommendedName>
    <alternativeName>
        <fullName evidence="1">1-hydroxy-2-methyl-2-(E)-butenyl 4-diphosphate synthase</fullName>
    </alternativeName>
</protein>
<evidence type="ECO:0000255" key="1">
    <source>
        <dbReference type="HAMAP-Rule" id="MF_00159"/>
    </source>
</evidence>
<gene>
    <name evidence="1" type="primary">ispG</name>
    <name type="synonym">gcpE</name>
    <name type="ordered locus">YPTB2841</name>
</gene>
<accession>Q667Z9</accession>
<dbReference type="EC" id="1.17.7.3" evidence="1"/>
<dbReference type="EMBL" id="BX936398">
    <property type="protein sequence ID" value="CAH22079.1"/>
    <property type="molecule type" value="Genomic_DNA"/>
</dbReference>
<dbReference type="RefSeq" id="WP_002209817.1">
    <property type="nucleotide sequence ID" value="NZ_CP009712.1"/>
</dbReference>
<dbReference type="SMR" id="Q667Z9"/>
<dbReference type="GeneID" id="57975837"/>
<dbReference type="KEGG" id="ypo:BZ17_3789"/>
<dbReference type="KEGG" id="yps:YPTB2841"/>
<dbReference type="PATRIC" id="fig|273123.14.peg.3975"/>
<dbReference type="UniPathway" id="UPA00056">
    <property type="reaction ID" value="UER00096"/>
</dbReference>
<dbReference type="Proteomes" id="UP000001011">
    <property type="component" value="Chromosome"/>
</dbReference>
<dbReference type="GO" id="GO:0051539">
    <property type="term" value="F:4 iron, 4 sulfur cluster binding"/>
    <property type="evidence" value="ECO:0007669"/>
    <property type="project" value="UniProtKB-UniRule"/>
</dbReference>
<dbReference type="GO" id="GO:0046429">
    <property type="term" value="F:4-hydroxy-3-methylbut-2-en-1-yl diphosphate synthase activity (ferredoxin)"/>
    <property type="evidence" value="ECO:0007669"/>
    <property type="project" value="UniProtKB-UniRule"/>
</dbReference>
<dbReference type="GO" id="GO:0141197">
    <property type="term" value="F:4-hydroxy-3-methylbut-2-enyl-diphosphate synthase activity (flavodoxin)"/>
    <property type="evidence" value="ECO:0007669"/>
    <property type="project" value="UniProtKB-EC"/>
</dbReference>
<dbReference type="GO" id="GO:0005506">
    <property type="term" value="F:iron ion binding"/>
    <property type="evidence" value="ECO:0007669"/>
    <property type="project" value="InterPro"/>
</dbReference>
<dbReference type="GO" id="GO:0019288">
    <property type="term" value="P:isopentenyl diphosphate biosynthetic process, methylerythritol 4-phosphate pathway"/>
    <property type="evidence" value="ECO:0007669"/>
    <property type="project" value="UniProtKB-UniRule"/>
</dbReference>
<dbReference type="GO" id="GO:0016114">
    <property type="term" value="P:terpenoid biosynthetic process"/>
    <property type="evidence" value="ECO:0007669"/>
    <property type="project" value="InterPro"/>
</dbReference>
<dbReference type="FunFam" id="3.20.20.20:FF:000001">
    <property type="entry name" value="4-hydroxy-3-methylbut-2-en-1-yl diphosphate synthase (flavodoxin)"/>
    <property type="match status" value="1"/>
</dbReference>
<dbReference type="FunFam" id="3.30.413.10:FF:000002">
    <property type="entry name" value="4-hydroxy-3-methylbut-2-en-1-yl diphosphate synthase (flavodoxin)"/>
    <property type="match status" value="1"/>
</dbReference>
<dbReference type="Gene3D" id="3.20.20.20">
    <property type="entry name" value="Dihydropteroate synthase-like"/>
    <property type="match status" value="1"/>
</dbReference>
<dbReference type="Gene3D" id="3.30.413.10">
    <property type="entry name" value="Sulfite Reductase Hemoprotein, domain 1"/>
    <property type="match status" value="1"/>
</dbReference>
<dbReference type="HAMAP" id="MF_00159">
    <property type="entry name" value="IspG"/>
    <property type="match status" value="1"/>
</dbReference>
<dbReference type="InterPro" id="IPR011005">
    <property type="entry name" value="Dihydropteroate_synth-like_sf"/>
</dbReference>
<dbReference type="InterPro" id="IPR036849">
    <property type="entry name" value="Enolase-like_C_sf"/>
</dbReference>
<dbReference type="InterPro" id="IPR016425">
    <property type="entry name" value="IspG_bac"/>
</dbReference>
<dbReference type="InterPro" id="IPR004588">
    <property type="entry name" value="IspG_bac-typ"/>
</dbReference>
<dbReference type="InterPro" id="IPR045854">
    <property type="entry name" value="NO2/SO3_Rdtase_4Fe4S_sf"/>
</dbReference>
<dbReference type="NCBIfam" id="TIGR00612">
    <property type="entry name" value="ispG_gcpE"/>
    <property type="match status" value="1"/>
</dbReference>
<dbReference type="NCBIfam" id="NF001540">
    <property type="entry name" value="PRK00366.1"/>
    <property type="match status" value="1"/>
</dbReference>
<dbReference type="PANTHER" id="PTHR30454">
    <property type="entry name" value="4-HYDROXY-3-METHYLBUT-2-EN-1-YL DIPHOSPHATE SYNTHASE"/>
    <property type="match status" value="1"/>
</dbReference>
<dbReference type="PANTHER" id="PTHR30454:SF0">
    <property type="entry name" value="4-HYDROXY-3-METHYLBUT-2-EN-1-YL DIPHOSPHATE SYNTHASE (FERREDOXIN), CHLOROPLASTIC"/>
    <property type="match status" value="1"/>
</dbReference>
<dbReference type="Pfam" id="PF04551">
    <property type="entry name" value="GcpE"/>
    <property type="match status" value="1"/>
</dbReference>
<dbReference type="PIRSF" id="PIRSF004640">
    <property type="entry name" value="IspG"/>
    <property type="match status" value="1"/>
</dbReference>
<dbReference type="SUPFAM" id="SSF51604">
    <property type="entry name" value="Enolase C-terminal domain-like"/>
    <property type="match status" value="1"/>
</dbReference>
<dbReference type="SUPFAM" id="SSF56014">
    <property type="entry name" value="Nitrite and sulphite reductase 4Fe-4S domain-like"/>
    <property type="match status" value="1"/>
</dbReference>
<reference key="1">
    <citation type="journal article" date="2004" name="Proc. Natl. Acad. Sci. U.S.A.">
        <title>Insights into the evolution of Yersinia pestis through whole-genome comparison with Yersinia pseudotuberculosis.</title>
        <authorList>
            <person name="Chain P.S.G."/>
            <person name="Carniel E."/>
            <person name="Larimer F.W."/>
            <person name="Lamerdin J."/>
            <person name="Stoutland P.O."/>
            <person name="Regala W.M."/>
            <person name="Georgescu A.M."/>
            <person name="Vergez L.M."/>
            <person name="Land M.L."/>
            <person name="Motin V.L."/>
            <person name="Brubaker R.R."/>
            <person name="Fowler J."/>
            <person name="Hinnebusch J."/>
            <person name="Marceau M."/>
            <person name="Medigue C."/>
            <person name="Simonet M."/>
            <person name="Chenal-Francisque V."/>
            <person name="Souza B."/>
            <person name="Dacheux D."/>
            <person name="Elliott J.M."/>
            <person name="Derbise A."/>
            <person name="Hauser L.J."/>
            <person name="Garcia E."/>
        </authorList>
    </citation>
    <scope>NUCLEOTIDE SEQUENCE [LARGE SCALE GENOMIC DNA]</scope>
    <source>
        <strain>IP32953</strain>
    </source>
</reference>